<organism>
    <name type="scientific">Streptomyces avermitilis (strain ATCC 31267 / DSM 46492 / JCM 5070 / NBRC 14893 / NCIMB 12804 / NRRL 8165 / MA-4680)</name>
    <dbReference type="NCBI Taxonomy" id="227882"/>
    <lineage>
        <taxon>Bacteria</taxon>
        <taxon>Bacillati</taxon>
        <taxon>Actinomycetota</taxon>
        <taxon>Actinomycetes</taxon>
        <taxon>Kitasatosporales</taxon>
        <taxon>Streptomycetaceae</taxon>
        <taxon>Streptomyces</taxon>
    </lineage>
</organism>
<sequence>MLRTMFKSKIHRATVTQADLHYVGSVTIDADLLDAADLLPGELVHIVDITNGARLETYVIEGERGSGVVGINGAAAHLVHPGDLVIIISYAQVSDAEARALRPRVVHVDRDNRVVALGADPAEPVPGSDQARSPQAVTA</sequence>
<evidence type="ECO:0000255" key="1">
    <source>
        <dbReference type="HAMAP-Rule" id="MF_00446"/>
    </source>
</evidence>
<evidence type="ECO:0000256" key="2">
    <source>
        <dbReference type="SAM" id="MobiDB-lite"/>
    </source>
</evidence>
<dbReference type="EC" id="4.1.1.11" evidence="1"/>
<dbReference type="EMBL" id="BA000030">
    <property type="protein sequence ID" value="BAC74956.1"/>
    <property type="molecule type" value="Genomic_DNA"/>
</dbReference>
<dbReference type="RefSeq" id="WP_010988640.1">
    <property type="nucleotide sequence ID" value="NZ_JZJK01000085.1"/>
</dbReference>
<dbReference type="SMR" id="Q826E8"/>
<dbReference type="GeneID" id="41544318"/>
<dbReference type="KEGG" id="sma:SAVERM_7245"/>
<dbReference type="eggNOG" id="COG0853">
    <property type="taxonomic scope" value="Bacteria"/>
</dbReference>
<dbReference type="HOGENOM" id="CLU_115305_2_0_11"/>
<dbReference type="OrthoDB" id="9803983at2"/>
<dbReference type="UniPathway" id="UPA00028">
    <property type="reaction ID" value="UER00002"/>
</dbReference>
<dbReference type="Proteomes" id="UP000000428">
    <property type="component" value="Chromosome"/>
</dbReference>
<dbReference type="GO" id="GO:0005829">
    <property type="term" value="C:cytosol"/>
    <property type="evidence" value="ECO:0007669"/>
    <property type="project" value="TreeGrafter"/>
</dbReference>
<dbReference type="GO" id="GO:0004068">
    <property type="term" value="F:aspartate 1-decarboxylase activity"/>
    <property type="evidence" value="ECO:0007669"/>
    <property type="project" value="UniProtKB-UniRule"/>
</dbReference>
<dbReference type="GO" id="GO:0006523">
    <property type="term" value="P:alanine biosynthetic process"/>
    <property type="evidence" value="ECO:0007669"/>
    <property type="project" value="InterPro"/>
</dbReference>
<dbReference type="GO" id="GO:0015940">
    <property type="term" value="P:pantothenate biosynthetic process"/>
    <property type="evidence" value="ECO:0007669"/>
    <property type="project" value="UniProtKB-UniRule"/>
</dbReference>
<dbReference type="CDD" id="cd06919">
    <property type="entry name" value="Asp_decarbox"/>
    <property type="match status" value="1"/>
</dbReference>
<dbReference type="Gene3D" id="2.40.40.20">
    <property type="match status" value="1"/>
</dbReference>
<dbReference type="HAMAP" id="MF_00446">
    <property type="entry name" value="PanD"/>
    <property type="match status" value="1"/>
</dbReference>
<dbReference type="InterPro" id="IPR009010">
    <property type="entry name" value="Asp_de-COase-like_dom_sf"/>
</dbReference>
<dbReference type="InterPro" id="IPR003190">
    <property type="entry name" value="Asp_decarbox"/>
</dbReference>
<dbReference type="NCBIfam" id="TIGR00223">
    <property type="entry name" value="panD"/>
    <property type="match status" value="1"/>
</dbReference>
<dbReference type="PANTHER" id="PTHR21012">
    <property type="entry name" value="ASPARTATE 1-DECARBOXYLASE"/>
    <property type="match status" value="1"/>
</dbReference>
<dbReference type="PANTHER" id="PTHR21012:SF0">
    <property type="entry name" value="ASPARTATE 1-DECARBOXYLASE"/>
    <property type="match status" value="1"/>
</dbReference>
<dbReference type="Pfam" id="PF02261">
    <property type="entry name" value="Asp_decarbox"/>
    <property type="match status" value="1"/>
</dbReference>
<dbReference type="PIRSF" id="PIRSF006246">
    <property type="entry name" value="Asp_decarbox"/>
    <property type="match status" value="1"/>
</dbReference>
<dbReference type="SUPFAM" id="SSF50692">
    <property type="entry name" value="ADC-like"/>
    <property type="match status" value="1"/>
</dbReference>
<proteinExistence type="inferred from homology"/>
<accession>Q826E8</accession>
<reference key="1">
    <citation type="journal article" date="2001" name="Proc. Natl. Acad. Sci. U.S.A.">
        <title>Genome sequence of an industrial microorganism Streptomyces avermitilis: deducing the ability of producing secondary metabolites.</title>
        <authorList>
            <person name="Omura S."/>
            <person name="Ikeda H."/>
            <person name="Ishikawa J."/>
            <person name="Hanamoto A."/>
            <person name="Takahashi C."/>
            <person name="Shinose M."/>
            <person name="Takahashi Y."/>
            <person name="Horikawa H."/>
            <person name="Nakazawa H."/>
            <person name="Osonoe T."/>
            <person name="Kikuchi H."/>
            <person name="Shiba T."/>
            <person name="Sakaki Y."/>
            <person name="Hattori M."/>
        </authorList>
    </citation>
    <scope>NUCLEOTIDE SEQUENCE [LARGE SCALE GENOMIC DNA]</scope>
    <source>
        <strain>ATCC 31267 / DSM 46492 / JCM 5070 / NBRC 14893 / NCIMB 12804 / NRRL 8165 / MA-4680</strain>
    </source>
</reference>
<reference key="2">
    <citation type="journal article" date="2003" name="Nat. Biotechnol.">
        <title>Complete genome sequence and comparative analysis of the industrial microorganism Streptomyces avermitilis.</title>
        <authorList>
            <person name="Ikeda H."/>
            <person name="Ishikawa J."/>
            <person name="Hanamoto A."/>
            <person name="Shinose M."/>
            <person name="Kikuchi H."/>
            <person name="Shiba T."/>
            <person name="Sakaki Y."/>
            <person name="Hattori M."/>
            <person name="Omura S."/>
        </authorList>
    </citation>
    <scope>NUCLEOTIDE SEQUENCE [LARGE SCALE GENOMIC DNA]</scope>
    <source>
        <strain>ATCC 31267 / DSM 46492 / JCM 5070 / NBRC 14893 / NCIMB 12804 / NRRL 8165 / MA-4680</strain>
    </source>
</reference>
<gene>
    <name evidence="1" type="primary">panD</name>
    <name type="ordered locus">SAV_7245</name>
</gene>
<keyword id="KW-0068">Autocatalytic cleavage</keyword>
<keyword id="KW-0963">Cytoplasm</keyword>
<keyword id="KW-0210">Decarboxylase</keyword>
<keyword id="KW-0456">Lyase</keyword>
<keyword id="KW-0566">Pantothenate biosynthesis</keyword>
<keyword id="KW-0670">Pyruvate</keyword>
<keyword id="KW-1185">Reference proteome</keyword>
<keyword id="KW-0704">Schiff base</keyword>
<keyword id="KW-0865">Zymogen</keyword>
<comment type="function">
    <text evidence="1">Catalyzes the pyruvoyl-dependent decarboxylation of aspartate to produce beta-alanine.</text>
</comment>
<comment type="catalytic activity">
    <reaction evidence="1">
        <text>L-aspartate + H(+) = beta-alanine + CO2</text>
        <dbReference type="Rhea" id="RHEA:19497"/>
        <dbReference type="ChEBI" id="CHEBI:15378"/>
        <dbReference type="ChEBI" id="CHEBI:16526"/>
        <dbReference type="ChEBI" id="CHEBI:29991"/>
        <dbReference type="ChEBI" id="CHEBI:57966"/>
        <dbReference type="EC" id="4.1.1.11"/>
    </reaction>
</comment>
<comment type="cofactor">
    <cofactor evidence="1">
        <name>pyruvate</name>
        <dbReference type="ChEBI" id="CHEBI:15361"/>
    </cofactor>
    <text evidence="1">Binds 1 pyruvoyl group covalently per subunit.</text>
</comment>
<comment type="pathway">
    <text evidence="1">Cofactor biosynthesis; (R)-pantothenate biosynthesis; beta-alanine from L-aspartate: step 1/1.</text>
</comment>
<comment type="subunit">
    <text evidence="1">Heterooctamer of four alpha and four beta subunits.</text>
</comment>
<comment type="subcellular location">
    <subcellularLocation>
        <location evidence="1">Cytoplasm</location>
    </subcellularLocation>
</comment>
<comment type="PTM">
    <text evidence="1">Is synthesized initially as an inactive proenzyme, which is activated by self-cleavage at a specific serine bond to produce a beta-subunit with a hydroxyl group at its C-terminus and an alpha-subunit with a pyruvoyl group at its N-terminus.</text>
</comment>
<comment type="similarity">
    <text evidence="1">Belongs to the PanD family.</text>
</comment>
<name>PAND_STRAW</name>
<protein>
    <recommendedName>
        <fullName evidence="1">Aspartate 1-decarboxylase</fullName>
        <ecNumber evidence="1">4.1.1.11</ecNumber>
    </recommendedName>
    <alternativeName>
        <fullName evidence="1">Aspartate alpha-decarboxylase</fullName>
    </alternativeName>
    <component>
        <recommendedName>
            <fullName evidence="1">Aspartate 1-decarboxylase beta chain</fullName>
        </recommendedName>
    </component>
    <component>
        <recommendedName>
            <fullName evidence="1">Aspartate 1-decarboxylase alpha chain</fullName>
        </recommendedName>
    </component>
</protein>
<feature type="chain" id="PRO_0000023173" description="Aspartate 1-decarboxylase beta chain" evidence="1">
    <location>
        <begin position="1"/>
        <end position="24"/>
    </location>
</feature>
<feature type="chain" id="PRO_0000023174" description="Aspartate 1-decarboxylase alpha chain" evidence="1">
    <location>
        <begin position="25"/>
        <end position="139"/>
    </location>
</feature>
<feature type="region of interest" description="Disordered" evidence="2">
    <location>
        <begin position="117"/>
        <end position="139"/>
    </location>
</feature>
<feature type="compositionally biased region" description="Polar residues" evidence="2">
    <location>
        <begin position="130"/>
        <end position="139"/>
    </location>
</feature>
<feature type="active site" description="Schiff-base intermediate with substrate; via pyruvic acid" evidence="1">
    <location>
        <position position="25"/>
    </location>
</feature>
<feature type="active site" description="Proton donor" evidence="1">
    <location>
        <position position="58"/>
    </location>
</feature>
<feature type="binding site" evidence="1">
    <location>
        <position position="57"/>
    </location>
    <ligand>
        <name>substrate</name>
    </ligand>
</feature>
<feature type="binding site" evidence="1">
    <location>
        <begin position="73"/>
        <end position="75"/>
    </location>
    <ligand>
        <name>substrate</name>
    </ligand>
</feature>
<feature type="modified residue" description="Pyruvic acid (Ser)" evidence="1">
    <location>
        <position position="25"/>
    </location>
</feature>